<protein>
    <recommendedName>
        <fullName evidence="1">Thioesterase TesA</fullName>
        <ecNumber evidence="1">3.1.2.-</ecNumber>
    </recommendedName>
</protein>
<organism>
    <name type="scientific">Mycobacterium bovis (strain ATCC BAA-935 / AF2122/97)</name>
    <dbReference type="NCBI Taxonomy" id="233413"/>
    <lineage>
        <taxon>Bacteria</taxon>
        <taxon>Bacillati</taxon>
        <taxon>Actinomycetota</taxon>
        <taxon>Actinomycetes</taxon>
        <taxon>Mycobacteriales</taxon>
        <taxon>Mycobacteriaceae</taxon>
        <taxon>Mycobacterium</taxon>
        <taxon>Mycobacterium tuberculosis complex</taxon>
    </lineage>
</organism>
<gene>
    <name type="primary">tesA</name>
    <name type="ordered locus">BQ2027_MB2953</name>
</gene>
<dbReference type="EC" id="3.1.2.-" evidence="1"/>
<dbReference type="EMBL" id="LT708304">
    <property type="protein sequence ID" value="SIU01574.1"/>
    <property type="molecule type" value="Genomic_DNA"/>
</dbReference>
<dbReference type="RefSeq" id="NP_856598.1">
    <property type="nucleotide sequence ID" value="NC_002945.3"/>
</dbReference>
<dbReference type="RefSeq" id="WP_003414828.1">
    <property type="nucleotide sequence ID" value="NC_002945.4"/>
</dbReference>
<dbReference type="SMR" id="P63461"/>
<dbReference type="ESTHER" id="myctu-yt28">
    <property type="family name" value="Thioesterase"/>
</dbReference>
<dbReference type="KEGG" id="mbo:BQ2027_MB2953"/>
<dbReference type="PATRIC" id="fig|233413.5.peg.3240"/>
<dbReference type="Proteomes" id="UP000001419">
    <property type="component" value="Chromosome"/>
</dbReference>
<dbReference type="GO" id="GO:0047617">
    <property type="term" value="F:fatty acyl-CoA hydrolase activity"/>
    <property type="evidence" value="ECO:0007669"/>
    <property type="project" value="RHEA"/>
</dbReference>
<dbReference type="GO" id="GO:0008610">
    <property type="term" value="P:lipid biosynthetic process"/>
    <property type="evidence" value="ECO:0007669"/>
    <property type="project" value="TreeGrafter"/>
</dbReference>
<dbReference type="Gene3D" id="3.40.50.1820">
    <property type="entry name" value="alpha/beta hydrolase"/>
    <property type="match status" value="1"/>
</dbReference>
<dbReference type="InterPro" id="IPR029058">
    <property type="entry name" value="AB_hydrolase_fold"/>
</dbReference>
<dbReference type="InterPro" id="IPR020802">
    <property type="entry name" value="PKS_thioesterase"/>
</dbReference>
<dbReference type="InterPro" id="IPR012223">
    <property type="entry name" value="TEII"/>
</dbReference>
<dbReference type="InterPro" id="IPR001031">
    <property type="entry name" value="Thioesterase"/>
</dbReference>
<dbReference type="PANTHER" id="PTHR11487:SF0">
    <property type="entry name" value="S-ACYL FATTY ACID SYNTHASE THIOESTERASE, MEDIUM CHAIN"/>
    <property type="match status" value="1"/>
</dbReference>
<dbReference type="PANTHER" id="PTHR11487">
    <property type="entry name" value="THIOESTERASE"/>
    <property type="match status" value="1"/>
</dbReference>
<dbReference type="Pfam" id="PF00975">
    <property type="entry name" value="Thioesterase"/>
    <property type="match status" value="1"/>
</dbReference>
<dbReference type="SMART" id="SM00824">
    <property type="entry name" value="PKS_TE"/>
    <property type="match status" value="1"/>
</dbReference>
<dbReference type="SUPFAM" id="SSF53474">
    <property type="entry name" value="alpha/beta-Hydrolases"/>
    <property type="match status" value="1"/>
</dbReference>
<feature type="chain" id="PRO_0000180366" description="Thioesterase TesA">
    <location>
        <begin position="1"/>
        <end position="261"/>
    </location>
</feature>
<feature type="region of interest" description="Disordered" evidence="2">
    <location>
        <begin position="1"/>
        <end position="24"/>
    </location>
</feature>
<feature type="active site" evidence="1">
    <location>
        <position position="104"/>
    </location>
</feature>
<feature type="active site" evidence="1">
    <location>
        <position position="208"/>
    </location>
</feature>
<feature type="active site" evidence="1">
    <location>
        <position position="236"/>
    </location>
</feature>
<reference key="1">
    <citation type="journal article" date="2003" name="Proc. Natl. Acad. Sci. U.S.A.">
        <title>The complete genome sequence of Mycobacterium bovis.</title>
        <authorList>
            <person name="Garnier T."/>
            <person name="Eiglmeier K."/>
            <person name="Camus J.-C."/>
            <person name="Medina N."/>
            <person name="Mansoor H."/>
            <person name="Pryor M."/>
            <person name="Duthoy S."/>
            <person name="Grondin S."/>
            <person name="Lacroix C."/>
            <person name="Monsempe C."/>
            <person name="Simon S."/>
            <person name="Harris B."/>
            <person name="Atkin R."/>
            <person name="Doggett J."/>
            <person name="Mayes R."/>
            <person name="Keating L."/>
            <person name="Wheeler P.R."/>
            <person name="Parkhill J."/>
            <person name="Barrell B.G."/>
            <person name="Cole S.T."/>
            <person name="Gordon S.V."/>
            <person name="Hewinson R.G."/>
        </authorList>
    </citation>
    <scope>NUCLEOTIDE SEQUENCE [LARGE SCALE GENOMIC DNA]</scope>
    <source>
        <strain>ATCC BAA-935 / AF2122/97</strain>
    </source>
</reference>
<reference key="2">
    <citation type="journal article" date="2017" name="Genome Announc.">
        <title>Updated reference genome sequence and annotation of Mycobacterium bovis AF2122/97.</title>
        <authorList>
            <person name="Malone K.M."/>
            <person name="Farrell D."/>
            <person name="Stuber T.P."/>
            <person name="Schubert O.T."/>
            <person name="Aebersold R."/>
            <person name="Robbe-Austerman S."/>
            <person name="Gordon S.V."/>
        </authorList>
    </citation>
    <scope>NUCLEOTIDE SEQUENCE [LARGE SCALE GENOMIC DNA]</scope>
    <scope>GENOME REANNOTATION</scope>
    <source>
        <strain>ATCC BAA-935 / AF2122/97</strain>
    </source>
</reference>
<keyword id="KW-0378">Hydrolase</keyword>
<keyword id="KW-0444">Lipid biosynthesis</keyword>
<keyword id="KW-0443">Lipid metabolism</keyword>
<keyword id="KW-1185">Reference proteome</keyword>
<keyword id="KW-0843">Virulence</keyword>
<comment type="function">
    <text evidence="1">Involved in the synthesis of both phthiocerol dimycocerosates (PDIMs) and phenolic glycolipids (PGLs), which are structurally related lipids non-covalently bound to the outer cell wall layer of M.tuberculosis and are important virulence factors.</text>
</comment>
<comment type="catalytic activity">
    <reaction evidence="1">
        <text>a fatty acyl-CoA + H2O = a fatty acid + CoA + H(+)</text>
        <dbReference type="Rhea" id="RHEA:16781"/>
        <dbReference type="ChEBI" id="CHEBI:15377"/>
        <dbReference type="ChEBI" id="CHEBI:15378"/>
        <dbReference type="ChEBI" id="CHEBI:28868"/>
        <dbReference type="ChEBI" id="CHEBI:57287"/>
        <dbReference type="ChEBI" id="CHEBI:77636"/>
    </reaction>
</comment>
<comment type="similarity">
    <text evidence="3">Belongs to the thioesterase family.</text>
</comment>
<sequence length="261" mass="29152">MLARHGPRYGGSVNGHSDDSSGDAKQAAPTLYIFPHAGGTAKDYVAFSREFSADVKRIAVQYPGQHDRSGLPPLESIPTLADEIFAMMKPSARIDDPVAFFGHSMGGMLAFEVALRYQSAGHRVLAFFVSACSAPGHIRYKQLQDLSDREMLDLFTRMTGMNPDFFTDDEFFVGALPTLRAVRAIAGYSCPPETKLSCPIYAFIGDKDWIATQDDMDPWRDRTTEEFSIRVFPGDHFYLNDNLPELVSDIEDKTLQWHDRA</sequence>
<name>TESA_MYCBO</name>
<accession>P63461</accession>
<accession>A0A1R3Y2M1</accession>
<accession>Q10974</accession>
<accession>X2BMI2</accession>
<proteinExistence type="inferred from homology"/>
<evidence type="ECO:0000250" key="1">
    <source>
        <dbReference type="UniProtKB" id="P9WQD5"/>
    </source>
</evidence>
<evidence type="ECO:0000256" key="2">
    <source>
        <dbReference type="SAM" id="MobiDB-lite"/>
    </source>
</evidence>
<evidence type="ECO:0000305" key="3"/>